<organism>
    <name type="scientific">Myrmecia gulosa</name>
    <name type="common">Red bulldog ant</name>
    <dbReference type="NCBI Taxonomy" id="36170"/>
    <lineage>
        <taxon>Eukaryota</taxon>
        <taxon>Metazoa</taxon>
        <taxon>Ecdysozoa</taxon>
        <taxon>Arthropoda</taxon>
        <taxon>Hexapoda</taxon>
        <taxon>Insecta</taxon>
        <taxon>Pterygota</taxon>
        <taxon>Neoptera</taxon>
        <taxon>Endopterygota</taxon>
        <taxon>Hymenoptera</taxon>
        <taxon>Apocrita</taxon>
        <taxon>Aculeata</taxon>
        <taxon>Formicoidea</taxon>
        <taxon>Formicidae</taxon>
        <taxon>Myrmeciinae</taxon>
        <taxon>Myrmeciini</taxon>
        <taxon>Myrmecia</taxon>
    </lineage>
</organism>
<feature type="signal peptide" evidence="7 8">
    <location>
        <begin position="1"/>
        <end position="30"/>
    </location>
</feature>
<feature type="chain" id="PRO_0000447109" description="OMEGA-myrmeciitoxin(02)-Mg1a" evidence="2">
    <location>
        <begin position="31"/>
        <end position="80"/>
    </location>
</feature>
<feature type="domain" description="EGF-like" evidence="1">
    <location>
        <begin position="35"/>
        <end position="75"/>
    </location>
</feature>
<feature type="disulfide bond" evidence="3 9">
    <location>
        <begin position="39"/>
        <end position="52"/>
    </location>
</feature>
<feature type="disulfide bond" evidence="3 9">
    <location>
        <begin position="47"/>
        <end position="63"/>
    </location>
</feature>
<feature type="disulfide bond" evidence="3 9">
    <location>
        <begin position="65"/>
        <end position="74"/>
    </location>
</feature>
<feature type="turn" evidence="10">
    <location>
        <begin position="33"/>
        <end position="35"/>
    </location>
</feature>
<feature type="helix" evidence="10">
    <location>
        <begin position="41"/>
        <end position="44"/>
    </location>
</feature>
<feature type="strand" evidence="10">
    <location>
        <begin position="48"/>
        <end position="52"/>
    </location>
</feature>
<feature type="turn" evidence="10">
    <location>
        <begin position="56"/>
        <end position="59"/>
    </location>
</feature>
<feature type="strand" evidence="10">
    <location>
        <begin position="63"/>
        <end position="65"/>
    </location>
</feature>
<feature type="strand" evidence="10">
    <location>
        <begin position="69"/>
        <end position="71"/>
    </location>
</feature>
<sequence length="80" mass="9099">MKNNYISTCIVYLMAALLLISVISIKECTADISDYGDPCSDDLKDYCIHGDCFFLKELNQPACRCYTGYYGSRCEHIDHN</sequence>
<evidence type="ECO:0000255" key="1">
    <source>
        <dbReference type="PROSITE-ProRule" id="PRU00076"/>
    </source>
</evidence>
<evidence type="ECO:0000269" key="2">
    <source>
    </source>
</evidence>
<evidence type="ECO:0000269" key="3">
    <source>
    </source>
</evidence>
<evidence type="ECO:0000303" key="4">
    <source>
    </source>
</evidence>
<evidence type="ECO:0000303" key="5">
    <source>
    </source>
</evidence>
<evidence type="ECO:0000305" key="6"/>
<evidence type="ECO:0000305" key="7">
    <source>
    </source>
</evidence>
<evidence type="ECO:0000305" key="8">
    <source>
    </source>
</evidence>
<evidence type="ECO:0007744" key="9">
    <source>
        <dbReference type="PDB" id="7R6P"/>
    </source>
</evidence>
<evidence type="ECO:0007829" key="10">
    <source>
        <dbReference type="PDB" id="7R6P"/>
    </source>
</evidence>
<name>TX21A_MYRGU</name>
<protein>
    <recommendedName>
        <fullName evidence="6">OMEGA-myrmeciitoxin(02)-Mg1a</fullName>
        <shortName evidence="4 5">MIITX2-Mg1a</shortName>
        <shortName evidence="6">OMEGA-MIITX(02)-Mg1a</shortName>
    </recommendedName>
</protein>
<proteinExistence type="evidence at protein level"/>
<accession>P0DSL4</accession>
<dbReference type="PDB" id="7R6P">
    <property type="method" value="NMR"/>
    <property type="chains" value="A=31-80"/>
</dbReference>
<dbReference type="PDBsum" id="7R6P"/>
<dbReference type="SMR" id="P0DSL4"/>
<dbReference type="GO" id="GO:0005615">
    <property type="term" value="C:extracellular space"/>
    <property type="evidence" value="ECO:0007669"/>
    <property type="project" value="TreeGrafter"/>
</dbReference>
<dbReference type="GO" id="GO:0005154">
    <property type="term" value="F:epidermal growth factor receptor binding"/>
    <property type="evidence" value="ECO:0007669"/>
    <property type="project" value="TreeGrafter"/>
</dbReference>
<dbReference type="GO" id="GO:0008083">
    <property type="term" value="F:growth factor activity"/>
    <property type="evidence" value="ECO:0007669"/>
    <property type="project" value="TreeGrafter"/>
</dbReference>
<dbReference type="GO" id="GO:0090729">
    <property type="term" value="F:toxin activity"/>
    <property type="evidence" value="ECO:0007669"/>
    <property type="project" value="UniProtKB-KW"/>
</dbReference>
<dbReference type="GO" id="GO:0007173">
    <property type="term" value="P:epidermal growth factor receptor signaling pathway"/>
    <property type="evidence" value="ECO:0007669"/>
    <property type="project" value="TreeGrafter"/>
</dbReference>
<dbReference type="GO" id="GO:0008284">
    <property type="term" value="P:positive regulation of cell population proliferation"/>
    <property type="evidence" value="ECO:0007669"/>
    <property type="project" value="TreeGrafter"/>
</dbReference>
<dbReference type="GO" id="GO:0045840">
    <property type="term" value="P:positive regulation of mitotic nuclear division"/>
    <property type="evidence" value="ECO:0007669"/>
    <property type="project" value="TreeGrafter"/>
</dbReference>
<dbReference type="Gene3D" id="2.10.25.10">
    <property type="entry name" value="Laminin"/>
    <property type="match status" value="1"/>
</dbReference>
<dbReference type="InterPro" id="IPR000742">
    <property type="entry name" value="EGF-like_dom"/>
</dbReference>
<dbReference type="PANTHER" id="PTHR10740:SF14">
    <property type="entry name" value="EGF-LIKE DOMAIN-CONTAINING PROTEIN"/>
    <property type="match status" value="1"/>
</dbReference>
<dbReference type="PANTHER" id="PTHR10740">
    <property type="entry name" value="TRANSFORMING GROWTH FACTOR ALPHA"/>
    <property type="match status" value="1"/>
</dbReference>
<dbReference type="PRINTS" id="PR00009">
    <property type="entry name" value="EGFTGF"/>
</dbReference>
<dbReference type="SUPFAM" id="SSF57196">
    <property type="entry name" value="EGF/Laminin"/>
    <property type="match status" value="1"/>
</dbReference>
<dbReference type="PROSITE" id="PS00022">
    <property type="entry name" value="EGF_1"/>
    <property type="match status" value="1"/>
</dbReference>
<dbReference type="PROSITE" id="PS01186">
    <property type="entry name" value="EGF_2"/>
    <property type="match status" value="1"/>
</dbReference>
<dbReference type="PROSITE" id="PS50026">
    <property type="entry name" value="EGF_3"/>
    <property type="match status" value="1"/>
</dbReference>
<comment type="function">
    <text evidence="3">Ant peptide with probable defensive activity which acts as a potent agonist of the mammalian epidermal growth factor receptor (EGFR) (EC(50)=6.3 nM). Mimics, both structurally and functionally, vertebrate epidermal growth factor (EGF) peptide hormones. In vivo, intraplantar injection in mice causes long-lasting (several days) hypersensitivity of the injected paw to both mechanical and thermal stimuli. Its long-lasting effect is unusual for venom toxins whose effects are usually immediate. One possible explanation is that it would reduce the duration of a nest attack, discourage future attacks, or enhance the actions of subsequent exposure to other pain-inducing venom peptides.</text>
</comment>
<comment type="subcellular location">
    <subcellularLocation>
        <location evidence="2 3">Secreted</location>
    </subcellularLocation>
</comment>
<comment type="tissue specificity">
    <text evidence="7 8">Expressed by the venom gland.</text>
</comment>
<comment type="mass spectrometry" mass="5787.37" method="MALDI" evidence="2"/>
<comment type="miscellaneous">
    <text evidence="3">Is the major venom component.</text>
</comment>
<comment type="miscellaneous">
    <text evidence="3">Negative results: in vivo, shallow intraplantar injection in mice does not cause spontaneous nocifensive behavior or signs of inflammation. Has no effect on crickets (A.domesticus), blowflies (L.cuprina), or fruit flies (D.melanogaster) after intraabdominal injection.</text>
</comment>
<comment type="similarity">
    <text evidence="6">Belongs to the EGF domain peptide family.</text>
</comment>
<comment type="online information" name="National Center for Biotechnology Information (NCBI)">
    <link uri="https://www.ncbi.nlm.nih.gov/nuccore/GGFG01000015"/>
</comment>
<comment type="online information" name="Protein Spotlight">
    <link uri="https://www.proteinspotlight.org/back_issues/259/"/>
    <text>On ants, bandicoots and Gilbertian mimicry - Issue 259 of June 2023</text>
</comment>
<reference key="1">
    <citation type="journal article" date="2018" name="Sci. Adv.">
        <title>A comprehensive portrait of the venom of the giant red bull ant, Myrmecia gulosa, reveals a hyperdiverse hymenopteran toxin gene family.</title>
        <authorList>
            <person name="Robinson S.D."/>
            <person name="Mueller A."/>
            <person name="Clayton D."/>
            <person name="Starobova H."/>
            <person name="Hamilton B.R."/>
            <person name="Payne R.J."/>
            <person name="Vetter I."/>
            <person name="King G.F."/>
            <person name="Undheim E.A.B."/>
        </authorList>
    </citation>
    <scope>NUCLEOTIDE SEQUENCE [MRNA]</scope>
    <scope>MASS SPECTROMETRY</scope>
    <scope>SUBCELLULAR LOCATION</scope>
    <source>
        <tissue>Venom</tissue>
        <tissue>Venom gland</tissue>
    </source>
</reference>
<reference key="2">
    <citation type="journal article" date="2022" name="Proc. Natl. Acad. Sci. U.S.A.">
        <title>A peptide toxin in ant venom mimics vertebrate EGF-like hormones to cause long-lasting hypersensitivity in mammals.</title>
        <authorList>
            <person name="Eagles D.A."/>
            <person name="Saez N.J."/>
            <person name="Krishnarjuna B."/>
            <person name="Bradford J.J."/>
            <person name="Chin Y.K."/>
            <person name="Starobova H."/>
            <person name="Mueller A."/>
            <person name="Reichelt M.E."/>
            <person name="Undheim E.A.B."/>
            <person name="Norton R.S."/>
            <person name="Thomas W.G."/>
            <person name="Vetter I."/>
            <person name="King G.F."/>
            <person name="Robinson S.D."/>
        </authorList>
    </citation>
    <scope>STRUCTURE BY NMR OF 31-80</scope>
    <scope>FUNCTION</scope>
    <scope>SUBCELLULAR LOCATION</scope>
    <scope>RECOMBINANT EXPRESSION</scope>
    <source>
        <tissue>Venom</tissue>
    </source>
</reference>
<keyword id="KW-0002">3D-structure</keyword>
<keyword id="KW-1015">Disulfide bond</keyword>
<keyword id="KW-0245">EGF-like domain</keyword>
<keyword id="KW-0528">Neurotoxin</keyword>
<keyword id="KW-0964">Secreted</keyword>
<keyword id="KW-0732">Signal</keyword>
<keyword id="KW-0800">Toxin</keyword>